<reference key="1">
    <citation type="journal article" date="2003" name="Proc. Natl. Acad. Sci. U.S.A.">
        <title>The complete genome sequence of Mycobacterium bovis.</title>
        <authorList>
            <person name="Garnier T."/>
            <person name="Eiglmeier K."/>
            <person name="Camus J.-C."/>
            <person name="Medina N."/>
            <person name="Mansoor H."/>
            <person name="Pryor M."/>
            <person name="Duthoy S."/>
            <person name="Grondin S."/>
            <person name="Lacroix C."/>
            <person name="Monsempe C."/>
            <person name="Simon S."/>
            <person name="Harris B."/>
            <person name="Atkin R."/>
            <person name="Doggett J."/>
            <person name="Mayes R."/>
            <person name="Keating L."/>
            <person name="Wheeler P.R."/>
            <person name="Parkhill J."/>
            <person name="Barrell B.G."/>
            <person name="Cole S.T."/>
            <person name="Gordon S.V."/>
            <person name="Hewinson R.G."/>
        </authorList>
    </citation>
    <scope>NUCLEOTIDE SEQUENCE [LARGE SCALE GENOMIC DNA]</scope>
    <source>
        <strain>ATCC BAA-935 / AF2122/97</strain>
    </source>
</reference>
<reference key="2">
    <citation type="journal article" date="2017" name="Genome Announc.">
        <title>Updated reference genome sequence and annotation of Mycobacterium bovis AF2122/97.</title>
        <authorList>
            <person name="Malone K.M."/>
            <person name="Farrell D."/>
            <person name="Stuber T.P."/>
            <person name="Schubert O.T."/>
            <person name="Aebersold R."/>
            <person name="Robbe-Austerman S."/>
            <person name="Gordon S.V."/>
        </authorList>
    </citation>
    <scope>NUCLEOTIDE SEQUENCE [LARGE SCALE GENOMIC DNA]</scope>
    <scope>GENOME REANNOTATION</scope>
    <source>
        <strain>ATCC BAA-935 / AF2122/97</strain>
    </source>
</reference>
<organism>
    <name type="scientific">Mycobacterium bovis (strain ATCC BAA-935 / AF2122/97)</name>
    <dbReference type="NCBI Taxonomy" id="233413"/>
    <lineage>
        <taxon>Bacteria</taxon>
        <taxon>Bacillati</taxon>
        <taxon>Actinomycetota</taxon>
        <taxon>Actinomycetes</taxon>
        <taxon>Mycobacteriales</taxon>
        <taxon>Mycobacteriaceae</taxon>
        <taxon>Mycobacterium</taxon>
        <taxon>Mycobacterium tuberculosis complex</taxon>
    </lineage>
</organism>
<gene>
    <name evidence="2" type="primary">ispE</name>
    <name type="ordered locus">BQ2027_MB1038</name>
</gene>
<accession>P65179</accession>
<accession>A0A1R3XX21</accession>
<accession>O05596</accession>
<accession>X2BGV6</accession>
<proteinExistence type="inferred from homology"/>
<evidence type="ECO:0000250" key="1">
    <source>
        <dbReference type="UniProtKB" id="P9WKG7"/>
    </source>
</evidence>
<evidence type="ECO:0000255" key="2">
    <source>
        <dbReference type="HAMAP-Rule" id="MF_00061"/>
    </source>
</evidence>
<name>ISPE_MYCBO</name>
<feature type="chain" id="PRO_0000189236" description="4-diphosphocytidyl-2-C-methyl-D-erythritol kinase">
    <location>
        <begin position="1"/>
        <end position="318"/>
    </location>
</feature>
<feature type="active site" evidence="2">
    <location>
        <position position="25"/>
    </location>
</feature>
<feature type="active site" evidence="2">
    <location>
        <position position="152"/>
    </location>
</feature>
<feature type="binding site" evidence="2">
    <location>
        <begin position="110"/>
        <end position="120"/>
    </location>
    <ligand>
        <name>ATP</name>
        <dbReference type="ChEBI" id="CHEBI:30616"/>
    </ligand>
</feature>
<protein>
    <recommendedName>
        <fullName evidence="2">4-diphosphocytidyl-2-C-methyl-D-erythritol kinase</fullName>
        <shortName evidence="2">CMK</shortName>
        <ecNumber evidence="2">2.7.1.148</ecNumber>
    </recommendedName>
    <alternativeName>
        <fullName evidence="2">4-(cytidine-5'-diphospho)-2-C-methyl-D-erythritol kinase</fullName>
    </alternativeName>
</protein>
<keyword id="KW-0067">ATP-binding</keyword>
<keyword id="KW-0414">Isoprene biosynthesis</keyword>
<keyword id="KW-0418">Kinase</keyword>
<keyword id="KW-0547">Nucleotide-binding</keyword>
<keyword id="KW-1185">Reference proteome</keyword>
<keyword id="KW-0808">Transferase</keyword>
<dbReference type="EC" id="2.7.1.148" evidence="2"/>
<dbReference type="EMBL" id="LT708304">
    <property type="protein sequence ID" value="SIT99638.1"/>
    <property type="status" value="ALT_INIT"/>
    <property type="molecule type" value="Genomic_DNA"/>
</dbReference>
<dbReference type="RefSeq" id="NP_854695.1">
    <property type="nucleotide sequence ID" value="NC_002945.3"/>
</dbReference>
<dbReference type="RefSeq" id="WP_003898690.1">
    <property type="nucleotide sequence ID" value="NC_002945.4"/>
</dbReference>
<dbReference type="SMR" id="P65179"/>
<dbReference type="KEGG" id="mbo:BQ2027_MB1038"/>
<dbReference type="PATRIC" id="fig|233413.5.peg.1130"/>
<dbReference type="UniPathway" id="UPA00056">
    <property type="reaction ID" value="UER00094"/>
</dbReference>
<dbReference type="Proteomes" id="UP000001419">
    <property type="component" value="Chromosome"/>
</dbReference>
<dbReference type="GO" id="GO:0050515">
    <property type="term" value="F:4-(cytidine 5'-diphospho)-2-C-methyl-D-erythritol kinase activity"/>
    <property type="evidence" value="ECO:0007669"/>
    <property type="project" value="UniProtKB-UniRule"/>
</dbReference>
<dbReference type="GO" id="GO:0005524">
    <property type="term" value="F:ATP binding"/>
    <property type="evidence" value="ECO:0007669"/>
    <property type="project" value="UniProtKB-UniRule"/>
</dbReference>
<dbReference type="GO" id="GO:0019288">
    <property type="term" value="P:isopentenyl diphosphate biosynthetic process, methylerythritol 4-phosphate pathway"/>
    <property type="evidence" value="ECO:0007669"/>
    <property type="project" value="UniProtKB-UniRule"/>
</dbReference>
<dbReference type="GO" id="GO:0016114">
    <property type="term" value="P:terpenoid biosynthetic process"/>
    <property type="evidence" value="ECO:0007669"/>
    <property type="project" value="InterPro"/>
</dbReference>
<dbReference type="FunFam" id="3.30.230.10:FF:000076">
    <property type="entry name" value="4-diphosphocytidyl-2-C-methyl-D-erythritol kinase"/>
    <property type="match status" value="1"/>
</dbReference>
<dbReference type="FunFam" id="3.30.70.890:FF:000013">
    <property type="entry name" value="4-diphosphocytidyl-2-C-methyl-D-erythritol kinase"/>
    <property type="match status" value="1"/>
</dbReference>
<dbReference type="Gene3D" id="3.30.230.10">
    <property type="match status" value="1"/>
</dbReference>
<dbReference type="Gene3D" id="3.30.70.890">
    <property type="entry name" value="GHMP kinase, C-terminal domain"/>
    <property type="match status" value="1"/>
</dbReference>
<dbReference type="HAMAP" id="MF_00061">
    <property type="entry name" value="IspE"/>
    <property type="match status" value="1"/>
</dbReference>
<dbReference type="InterPro" id="IPR013750">
    <property type="entry name" value="GHMP_kinase_C_dom"/>
</dbReference>
<dbReference type="InterPro" id="IPR036554">
    <property type="entry name" value="GHMP_kinase_C_sf"/>
</dbReference>
<dbReference type="InterPro" id="IPR006204">
    <property type="entry name" value="GHMP_kinase_N_dom"/>
</dbReference>
<dbReference type="InterPro" id="IPR004424">
    <property type="entry name" value="IspE"/>
</dbReference>
<dbReference type="InterPro" id="IPR020568">
    <property type="entry name" value="Ribosomal_Su5_D2-typ_SF"/>
</dbReference>
<dbReference type="InterPro" id="IPR014721">
    <property type="entry name" value="Ribsml_uS5_D2-typ_fold_subgr"/>
</dbReference>
<dbReference type="NCBIfam" id="TIGR00154">
    <property type="entry name" value="ispE"/>
    <property type="match status" value="1"/>
</dbReference>
<dbReference type="NCBIfam" id="NF002870">
    <property type="entry name" value="PRK03188.1"/>
    <property type="match status" value="1"/>
</dbReference>
<dbReference type="PANTHER" id="PTHR43527">
    <property type="entry name" value="4-DIPHOSPHOCYTIDYL-2-C-METHYL-D-ERYTHRITOL KINASE, CHLOROPLASTIC"/>
    <property type="match status" value="1"/>
</dbReference>
<dbReference type="PANTHER" id="PTHR43527:SF2">
    <property type="entry name" value="4-DIPHOSPHOCYTIDYL-2-C-METHYL-D-ERYTHRITOL KINASE, CHLOROPLASTIC"/>
    <property type="match status" value="1"/>
</dbReference>
<dbReference type="Pfam" id="PF08544">
    <property type="entry name" value="GHMP_kinases_C"/>
    <property type="match status" value="1"/>
</dbReference>
<dbReference type="Pfam" id="PF00288">
    <property type="entry name" value="GHMP_kinases_N"/>
    <property type="match status" value="1"/>
</dbReference>
<dbReference type="PIRSF" id="PIRSF010376">
    <property type="entry name" value="IspE"/>
    <property type="match status" value="1"/>
</dbReference>
<dbReference type="SUPFAM" id="SSF55060">
    <property type="entry name" value="GHMP Kinase, C-terminal domain"/>
    <property type="match status" value="1"/>
</dbReference>
<dbReference type="SUPFAM" id="SSF54211">
    <property type="entry name" value="Ribosomal protein S5 domain 2-like"/>
    <property type="match status" value="1"/>
</dbReference>
<sequence>MSASDGNTAELWVPTGSVTVRVPGKVNLYLAVGDRREDGYHELTTVFHAVSLVDEVTVRNADVLSLELVGEGADQLPTDERNLAWQAAELMAEHVGRAPDVSIMIDKSIPVAGGMAGGSADAAAVLVAMNSLWELNVPRRDLRMLAARLGSDVPFALHGGTALGTGRGEELATVLSRNTFHWVLAFADSGLLTSAVYNELDRLREVGDPPRLGEPGPVLAALAAGDPDQLAPLLGNEMQAAAVSLDPALARALRAGVEAGALAGIVSGSGPTCAFLCTSASSAIDVGAQLSGAGVCRTVRVATGPVPGARVVSAPTEV</sequence>
<comment type="function">
    <text evidence="2">Catalyzes the phosphorylation of the position 2 hydroxy group of 4-diphosphocytidyl-2C-methyl-D-erythritol.</text>
</comment>
<comment type="catalytic activity">
    <reaction evidence="2">
        <text>4-CDP-2-C-methyl-D-erythritol + ATP = 4-CDP-2-C-methyl-D-erythritol 2-phosphate + ADP + H(+)</text>
        <dbReference type="Rhea" id="RHEA:18437"/>
        <dbReference type="ChEBI" id="CHEBI:15378"/>
        <dbReference type="ChEBI" id="CHEBI:30616"/>
        <dbReference type="ChEBI" id="CHEBI:57823"/>
        <dbReference type="ChEBI" id="CHEBI:57919"/>
        <dbReference type="ChEBI" id="CHEBI:456216"/>
        <dbReference type="EC" id="2.7.1.148"/>
    </reaction>
</comment>
<comment type="pathway">
    <text evidence="2">Isoprenoid biosynthesis; isopentenyl diphosphate biosynthesis via DXP pathway; isopentenyl diphosphate from 1-deoxy-D-xylulose 5-phosphate: step 3/6.</text>
</comment>
<comment type="similarity">
    <text evidence="2">Belongs to the GHMP kinase family. IspE subfamily.</text>
</comment>
<comment type="sequence caution" evidence="1">
    <conflict type="erroneous initiation">
        <sequence resource="EMBL-CDS" id="SIT99638"/>
    </conflict>
    <text>Truncated N-terminus.</text>
</comment>